<gene>
    <name evidence="1" type="primary">argJ</name>
    <name type="ordered locus">LMOf2365_1612</name>
</gene>
<keyword id="KW-0012">Acyltransferase</keyword>
<keyword id="KW-0028">Amino-acid biosynthesis</keyword>
<keyword id="KW-0055">Arginine biosynthesis</keyword>
<keyword id="KW-0068">Autocatalytic cleavage</keyword>
<keyword id="KW-0963">Cytoplasm</keyword>
<keyword id="KW-0511">Multifunctional enzyme</keyword>
<keyword id="KW-0808">Transferase</keyword>
<organism>
    <name type="scientific">Listeria monocytogenes serotype 4b (strain F2365)</name>
    <dbReference type="NCBI Taxonomy" id="265669"/>
    <lineage>
        <taxon>Bacteria</taxon>
        <taxon>Bacillati</taxon>
        <taxon>Bacillota</taxon>
        <taxon>Bacilli</taxon>
        <taxon>Bacillales</taxon>
        <taxon>Listeriaceae</taxon>
        <taxon>Listeria</taxon>
    </lineage>
</organism>
<sequence length="398" mass="42785">MELVKGNIASPKGFYADGKHAGLKRKRNDIGWIYSEVPANAAAVYTMNQMQAAPIFVTKDSFQSNAKLQAIIVNSGNANACTGNQGMLDALAMRAQTAEKLDIPLDYVAVASTGIIGDMLPMDKINAGIEMLEKQTGNAADFEEAILTTDTFQKQISFQTEIGGRKVTMSGVAKGSGMIHPNMATMLAFITTDAAIPAELLQKLLKIKVDKTFNQITVDGDTSTNDMVVVMANGCAENPMLQEGTADFAKFADMFQAVMEHLAKSIARDGEGATKLIEVQVNGATKTEDARMIAKKIVSSSLVKTAAFGGDGNWGRIICAIGYSGGRFAPDNITIKIGGIEILNHSSQTIFNQQALDAYLEEEHIIIDVDLHIGLESGTAWGCDLSYEYVKINACYRT</sequence>
<dbReference type="EC" id="2.3.1.35" evidence="1"/>
<dbReference type="EC" id="2.3.1.1" evidence="1"/>
<dbReference type="EMBL" id="AE017262">
    <property type="protein sequence ID" value="AAT04387.1"/>
    <property type="molecule type" value="Genomic_DNA"/>
</dbReference>
<dbReference type="RefSeq" id="WP_010958916.1">
    <property type="nucleotide sequence ID" value="NC_002973.6"/>
</dbReference>
<dbReference type="SMR" id="Q71Z77"/>
<dbReference type="MEROPS" id="T05.002"/>
<dbReference type="KEGG" id="lmf:LMOf2365_1612"/>
<dbReference type="HOGENOM" id="CLU_027172_1_0_9"/>
<dbReference type="UniPathway" id="UPA00068">
    <property type="reaction ID" value="UER00106"/>
</dbReference>
<dbReference type="UniPathway" id="UPA00068">
    <property type="reaction ID" value="UER00111"/>
</dbReference>
<dbReference type="GO" id="GO:0005737">
    <property type="term" value="C:cytoplasm"/>
    <property type="evidence" value="ECO:0007669"/>
    <property type="project" value="UniProtKB-SubCell"/>
</dbReference>
<dbReference type="GO" id="GO:0004358">
    <property type="term" value="F:glutamate N-acetyltransferase activity"/>
    <property type="evidence" value="ECO:0007669"/>
    <property type="project" value="UniProtKB-UniRule"/>
</dbReference>
<dbReference type="GO" id="GO:0004042">
    <property type="term" value="F:L-glutamate N-acetyltransferase activity"/>
    <property type="evidence" value="ECO:0007669"/>
    <property type="project" value="UniProtKB-UniRule"/>
</dbReference>
<dbReference type="GO" id="GO:0006526">
    <property type="term" value="P:L-arginine biosynthetic process"/>
    <property type="evidence" value="ECO:0007669"/>
    <property type="project" value="UniProtKB-UniRule"/>
</dbReference>
<dbReference type="GO" id="GO:0006592">
    <property type="term" value="P:ornithine biosynthetic process"/>
    <property type="evidence" value="ECO:0007669"/>
    <property type="project" value="TreeGrafter"/>
</dbReference>
<dbReference type="CDD" id="cd02152">
    <property type="entry name" value="OAT"/>
    <property type="match status" value="1"/>
</dbReference>
<dbReference type="FunFam" id="3.10.20.340:FF:000001">
    <property type="entry name" value="Arginine biosynthesis bifunctional protein ArgJ, chloroplastic"/>
    <property type="match status" value="1"/>
</dbReference>
<dbReference type="FunFam" id="3.60.70.12:FF:000001">
    <property type="entry name" value="Arginine biosynthesis bifunctional protein ArgJ, chloroplastic"/>
    <property type="match status" value="1"/>
</dbReference>
<dbReference type="FunFam" id="3.30.2330.10:FF:000001">
    <property type="entry name" value="Arginine biosynthesis bifunctional protein ArgJ, mitochondrial"/>
    <property type="match status" value="1"/>
</dbReference>
<dbReference type="Gene3D" id="3.30.2330.10">
    <property type="entry name" value="arginine biosynthesis bifunctional protein suprefamily"/>
    <property type="match status" value="1"/>
</dbReference>
<dbReference type="Gene3D" id="3.10.20.340">
    <property type="entry name" value="ArgJ beta chain, C-terminal domain"/>
    <property type="match status" value="1"/>
</dbReference>
<dbReference type="Gene3D" id="3.60.70.12">
    <property type="entry name" value="L-amino peptidase D-ALA esterase/amidase"/>
    <property type="match status" value="1"/>
</dbReference>
<dbReference type="HAMAP" id="MF_01106">
    <property type="entry name" value="ArgJ"/>
    <property type="match status" value="1"/>
</dbReference>
<dbReference type="InterPro" id="IPR002813">
    <property type="entry name" value="Arg_biosynth_ArgJ"/>
</dbReference>
<dbReference type="InterPro" id="IPR016117">
    <property type="entry name" value="ArgJ-like_dom_sf"/>
</dbReference>
<dbReference type="InterPro" id="IPR042195">
    <property type="entry name" value="ArgJ_beta_C"/>
</dbReference>
<dbReference type="NCBIfam" id="TIGR00120">
    <property type="entry name" value="ArgJ"/>
    <property type="match status" value="1"/>
</dbReference>
<dbReference type="NCBIfam" id="NF003802">
    <property type="entry name" value="PRK05388.1"/>
    <property type="match status" value="1"/>
</dbReference>
<dbReference type="PANTHER" id="PTHR23100">
    <property type="entry name" value="ARGININE BIOSYNTHESIS BIFUNCTIONAL PROTEIN ARGJ"/>
    <property type="match status" value="1"/>
</dbReference>
<dbReference type="PANTHER" id="PTHR23100:SF0">
    <property type="entry name" value="ARGININE BIOSYNTHESIS BIFUNCTIONAL PROTEIN ARGJ, MITOCHONDRIAL"/>
    <property type="match status" value="1"/>
</dbReference>
<dbReference type="Pfam" id="PF01960">
    <property type="entry name" value="ArgJ"/>
    <property type="match status" value="1"/>
</dbReference>
<dbReference type="SUPFAM" id="SSF56266">
    <property type="entry name" value="DmpA/ArgJ-like"/>
    <property type="match status" value="1"/>
</dbReference>
<accession>Q71Z77</accession>
<feature type="chain" id="PRO_0000002185" description="Arginine biosynthesis bifunctional protein ArgJ alpha chain" evidence="1">
    <location>
        <begin position="1"/>
        <end position="184"/>
    </location>
</feature>
<feature type="chain" id="PRO_0000002186" description="Arginine biosynthesis bifunctional protein ArgJ beta chain" evidence="1">
    <location>
        <begin position="185"/>
        <end position="398"/>
    </location>
</feature>
<feature type="active site" description="Nucleophile" evidence="1">
    <location>
        <position position="185"/>
    </location>
</feature>
<feature type="binding site" evidence="1">
    <location>
        <position position="148"/>
    </location>
    <ligand>
        <name>substrate</name>
    </ligand>
</feature>
<feature type="binding site" evidence="1">
    <location>
        <position position="174"/>
    </location>
    <ligand>
        <name>substrate</name>
    </ligand>
</feature>
<feature type="binding site" evidence="1">
    <location>
        <position position="185"/>
    </location>
    <ligand>
        <name>substrate</name>
    </ligand>
</feature>
<feature type="binding site" evidence="1">
    <location>
        <position position="271"/>
    </location>
    <ligand>
        <name>substrate</name>
    </ligand>
</feature>
<feature type="binding site" evidence="1">
    <location>
        <position position="393"/>
    </location>
    <ligand>
        <name>substrate</name>
    </ligand>
</feature>
<feature type="binding site" evidence="1">
    <location>
        <position position="398"/>
    </location>
    <ligand>
        <name>substrate</name>
    </ligand>
</feature>
<feature type="site" description="Involved in the stabilization of negative charge on the oxyanion by the formation of the oxyanion hole" evidence="1">
    <location>
        <position position="113"/>
    </location>
</feature>
<feature type="site" description="Involved in the stabilization of negative charge on the oxyanion by the formation of the oxyanion hole" evidence="1">
    <location>
        <position position="114"/>
    </location>
</feature>
<feature type="site" description="Cleavage; by autolysis" evidence="1">
    <location>
        <begin position="184"/>
        <end position="185"/>
    </location>
</feature>
<name>ARGJ_LISMF</name>
<protein>
    <recommendedName>
        <fullName evidence="1">Arginine biosynthesis bifunctional protein ArgJ</fullName>
    </recommendedName>
    <domain>
        <recommendedName>
            <fullName evidence="1">Glutamate N-acetyltransferase</fullName>
            <ecNumber evidence="1">2.3.1.35</ecNumber>
        </recommendedName>
        <alternativeName>
            <fullName evidence="1">Ornithine acetyltransferase</fullName>
            <shortName evidence="1">OATase</shortName>
        </alternativeName>
        <alternativeName>
            <fullName evidence="1">Ornithine transacetylase</fullName>
        </alternativeName>
    </domain>
    <domain>
        <recommendedName>
            <fullName evidence="1">Amino-acid acetyltransferase</fullName>
            <ecNumber evidence="1">2.3.1.1</ecNumber>
        </recommendedName>
        <alternativeName>
            <fullName evidence="1">N-acetylglutamate synthase</fullName>
            <shortName evidence="1">AGSase</shortName>
        </alternativeName>
    </domain>
    <component>
        <recommendedName>
            <fullName evidence="1">Arginine biosynthesis bifunctional protein ArgJ alpha chain</fullName>
        </recommendedName>
    </component>
    <component>
        <recommendedName>
            <fullName evidence="1">Arginine biosynthesis bifunctional protein ArgJ beta chain</fullName>
        </recommendedName>
    </component>
</protein>
<proteinExistence type="inferred from homology"/>
<comment type="function">
    <text evidence="1">Catalyzes two activities which are involved in the cyclic version of arginine biosynthesis: the synthesis of N-acetylglutamate from glutamate and acetyl-CoA as the acetyl donor, and of ornithine by transacetylation between N(2)-acetylornithine and glutamate.</text>
</comment>
<comment type="catalytic activity">
    <reaction evidence="1">
        <text>N(2)-acetyl-L-ornithine + L-glutamate = N-acetyl-L-glutamate + L-ornithine</text>
        <dbReference type="Rhea" id="RHEA:15349"/>
        <dbReference type="ChEBI" id="CHEBI:29985"/>
        <dbReference type="ChEBI" id="CHEBI:44337"/>
        <dbReference type="ChEBI" id="CHEBI:46911"/>
        <dbReference type="ChEBI" id="CHEBI:57805"/>
        <dbReference type="EC" id="2.3.1.35"/>
    </reaction>
</comment>
<comment type="catalytic activity">
    <reaction evidence="1">
        <text>L-glutamate + acetyl-CoA = N-acetyl-L-glutamate + CoA + H(+)</text>
        <dbReference type="Rhea" id="RHEA:24292"/>
        <dbReference type="ChEBI" id="CHEBI:15378"/>
        <dbReference type="ChEBI" id="CHEBI:29985"/>
        <dbReference type="ChEBI" id="CHEBI:44337"/>
        <dbReference type="ChEBI" id="CHEBI:57287"/>
        <dbReference type="ChEBI" id="CHEBI:57288"/>
        <dbReference type="EC" id="2.3.1.1"/>
    </reaction>
</comment>
<comment type="pathway">
    <text evidence="1">Amino-acid biosynthesis; L-arginine biosynthesis; L-ornithine and N-acetyl-L-glutamate from L-glutamate and N(2)-acetyl-L-ornithine (cyclic): step 1/1.</text>
</comment>
<comment type="pathway">
    <text evidence="1">Amino-acid biosynthesis; L-arginine biosynthesis; N(2)-acetyl-L-ornithine from L-glutamate: step 1/4.</text>
</comment>
<comment type="subunit">
    <text evidence="1">Heterotetramer of two alpha and two beta chains.</text>
</comment>
<comment type="subcellular location">
    <subcellularLocation>
        <location evidence="1">Cytoplasm</location>
    </subcellularLocation>
</comment>
<comment type="similarity">
    <text evidence="1">Belongs to the ArgJ family.</text>
</comment>
<evidence type="ECO:0000255" key="1">
    <source>
        <dbReference type="HAMAP-Rule" id="MF_01106"/>
    </source>
</evidence>
<reference key="1">
    <citation type="journal article" date="2004" name="Nucleic Acids Res.">
        <title>Whole genome comparisons of serotype 4b and 1/2a strains of the food-borne pathogen Listeria monocytogenes reveal new insights into the core genome components of this species.</title>
        <authorList>
            <person name="Nelson K.E."/>
            <person name="Fouts D.E."/>
            <person name="Mongodin E.F."/>
            <person name="Ravel J."/>
            <person name="DeBoy R.T."/>
            <person name="Kolonay J.F."/>
            <person name="Rasko D.A."/>
            <person name="Angiuoli S.V."/>
            <person name="Gill S.R."/>
            <person name="Paulsen I.T."/>
            <person name="Peterson J.D."/>
            <person name="White O."/>
            <person name="Nelson W.C."/>
            <person name="Nierman W.C."/>
            <person name="Beanan M.J."/>
            <person name="Brinkac L.M."/>
            <person name="Daugherty S.C."/>
            <person name="Dodson R.J."/>
            <person name="Durkin A.S."/>
            <person name="Madupu R."/>
            <person name="Haft D.H."/>
            <person name="Selengut J."/>
            <person name="Van Aken S.E."/>
            <person name="Khouri H.M."/>
            <person name="Fedorova N."/>
            <person name="Forberger H.A."/>
            <person name="Tran B."/>
            <person name="Kathariou S."/>
            <person name="Wonderling L.D."/>
            <person name="Uhlich G.A."/>
            <person name="Bayles D.O."/>
            <person name="Luchansky J.B."/>
            <person name="Fraser C.M."/>
        </authorList>
    </citation>
    <scope>NUCLEOTIDE SEQUENCE [LARGE SCALE GENOMIC DNA]</scope>
    <source>
        <strain>F2365</strain>
    </source>
</reference>